<dbReference type="EC" id="7.3.2.1" evidence="1"/>
<dbReference type="EMBL" id="AE017262">
    <property type="protein sequence ID" value="AAT05234.1"/>
    <property type="molecule type" value="Genomic_DNA"/>
</dbReference>
<dbReference type="SMR" id="Q71WT2"/>
<dbReference type="KEGG" id="lmf:LMOf2365_2469"/>
<dbReference type="HOGENOM" id="CLU_000604_1_22_9"/>
<dbReference type="GO" id="GO:0005886">
    <property type="term" value="C:plasma membrane"/>
    <property type="evidence" value="ECO:0007669"/>
    <property type="project" value="UniProtKB-SubCell"/>
</dbReference>
<dbReference type="GO" id="GO:0005524">
    <property type="term" value="F:ATP binding"/>
    <property type="evidence" value="ECO:0007669"/>
    <property type="project" value="UniProtKB-KW"/>
</dbReference>
<dbReference type="GO" id="GO:0016887">
    <property type="term" value="F:ATP hydrolysis activity"/>
    <property type="evidence" value="ECO:0007669"/>
    <property type="project" value="InterPro"/>
</dbReference>
<dbReference type="GO" id="GO:0015415">
    <property type="term" value="F:ATPase-coupled phosphate ion transmembrane transporter activity"/>
    <property type="evidence" value="ECO:0007669"/>
    <property type="project" value="UniProtKB-EC"/>
</dbReference>
<dbReference type="GO" id="GO:0035435">
    <property type="term" value="P:phosphate ion transmembrane transport"/>
    <property type="evidence" value="ECO:0007669"/>
    <property type="project" value="InterPro"/>
</dbReference>
<dbReference type="CDD" id="cd03260">
    <property type="entry name" value="ABC_PstB_phosphate_transporter"/>
    <property type="match status" value="1"/>
</dbReference>
<dbReference type="FunFam" id="3.40.50.300:FF:000132">
    <property type="entry name" value="Phosphate import ATP-binding protein PstB"/>
    <property type="match status" value="1"/>
</dbReference>
<dbReference type="Gene3D" id="3.40.50.300">
    <property type="entry name" value="P-loop containing nucleotide triphosphate hydrolases"/>
    <property type="match status" value="1"/>
</dbReference>
<dbReference type="InterPro" id="IPR003593">
    <property type="entry name" value="AAA+_ATPase"/>
</dbReference>
<dbReference type="InterPro" id="IPR003439">
    <property type="entry name" value="ABC_transporter-like_ATP-bd"/>
</dbReference>
<dbReference type="InterPro" id="IPR017871">
    <property type="entry name" value="ABC_transporter-like_CS"/>
</dbReference>
<dbReference type="InterPro" id="IPR027417">
    <property type="entry name" value="P-loop_NTPase"/>
</dbReference>
<dbReference type="InterPro" id="IPR005670">
    <property type="entry name" value="PstB-like"/>
</dbReference>
<dbReference type="NCBIfam" id="TIGR00972">
    <property type="entry name" value="3a0107s01c2"/>
    <property type="match status" value="1"/>
</dbReference>
<dbReference type="PANTHER" id="PTHR43423">
    <property type="entry name" value="ABC TRANSPORTER I FAMILY MEMBER 17"/>
    <property type="match status" value="1"/>
</dbReference>
<dbReference type="PANTHER" id="PTHR43423:SF10">
    <property type="entry name" value="PHOSPHATE IMPORT ATP-BINDING PROTEIN PSTB 2"/>
    <property type="match status" value="1"/>
</dbReference>
<dbReference type="Pfam" id="PF00005">
    <property type="entry name" value="ABC_tran"/>
    <property type="match status" value="1"/>
</dbReference>
<dbReference type="SMART" id="SM00382">
    <property type="entry name" value="AAA"/>
    <property type="match status" value="1"/>
</dbReference>
<dbReference type="SUPFAM" id="SSF52540">
    <property type="entry name" value="P-loop containing nucleoside triphosphate hydrolases"/>
    <property type="match status" value="1"/>
</dbReference>
<dbReference type="PROSITE" id="PS00211">
    <property type="entry name" value="ABC_TRANSPORTER_1"/>
    <property type="match status" value="1"/>
</dbReference>
<dbReference type="PROSITE" id="PS50893">
    <property type="entry name" value="ABC_TRANSPORTER_2"/>
    <property type="match status" value="1"/>
</dbReference>
<dbReference type="PROSITE" id="PS51238">
    <property type="entry name" value="PSTB"/>
    <property type="match status" value="1"/>
</dbReference>
<protein>
    <recommendedName>
        <fullName evidence="1">Phosphate import ATP-binding protein PstB 2</fullName>
        <ecNumber evidence="1">7.3.2.1</ecNumber>
    </recommendedName>
    <alternativeName>
        <fullName evidence="1">ABC phosphate transporter 2</fullName>
    </alternativeName>
    <alternativeName>
        <fullName evidence="1">Phosphate-transporting ATPase 2</fullName>
    </alternativeName>
</protein>
<comment type="function">
    <text evidence="1">Part of the ABC transporter complex PstSACB involved in phosphate import. Responsible for energy coupling to the transport system.</text>
</comment>
<comment type="catalytic activity">
    <reaction evidence="1">
        <text>phosphate(out) + ATP + H2O = ADP + 2 phosphate(in) + H(+)</text>
        <dbReference type="Rhea" id="RHEA:24440"/>
        <dbReference type="ChEBI" id="CHEBI:15377"/>
        <dbReference type="ChEBI" id="CHEBI:15378"/>
        <dbReference type="ChEBI" id="CHEBI:30616"/>
        <dbReference type="ChEBI" id="CHEBI:43474"/>
        <dbReference type="ChEBI" id="CHEBI:456216"/>
        <dbReference type="EC" id="7.3.2.1"/>
    </reaction>
</comment>
<comment type="subunit">
    <text evidence="1">The complex is composed of two ATP-binding proteins (PstB), two transmembrane proteins (PstC and PstA) and a solute-binding protein (PstS).</text>
</comment>
<comment type="subcellular location">
    <subcellularLocation>
        <location evidence="1">Cell membrane</location>
        <topology evidence="1">Peripheral membrane protein</topology>
    </subcellularLocation>
</comment>
<comment type="similarity">
    <text evidence="1">Belongs to the ABC transporter superfamily. Phosphate importer (TC 3.A.1.7) family.</text>
</comment>
<feature type="chain" id="PRO_0000092832" description="Phosphate import ATP-binding protein PstB 2">
    <location>
        <begin position="1"/>
        <end position="271"/>
    </location>
</feature>
<feature type="domain" description="ABC transporter" evidence="1">
    <location>
        <begin position="25"/>
        <end position="266"/>
    </location>
</feature>
<feature type="binding site" evidence="1">
    <location>
        <begin position="57"/>
        <end position="64"/>
    </location>
    <ligand>
        <name>ATP</name>
        <dbReference type="ChEBI" id="CHEBI:30616"/>
    </ligand>
</feature>
<accession>Q71WT2</accession>
<reference key="1">
    <citation type="journal article" date="2004" name="Nucleic Acids Res.">
        <title>Whole genome comparisons of serotype 4b and 1/2a strains of the food-borne pathogen Listeria monocytogenes reveal new insights into the core genome components of this species.</title>
        <authorList>
            <person name="Nelson K.E."/>
            <person name="Fouts D.E."/>
            <person name="Mongodin E.F."/>
            <person name="Ravel J."/>
            <person name="DeBoy R.T."/>
            <person name="Kolonay J.F."/>
            <person name="Rasko D.A."/>
            <person name="Angiuoli S.V."/>
            <person name="Gill S.R."/>
            <person name="Paulsen I.T."/>
            <person name="Peterson J.D."/>
            <person name="White O."/>
            <person name="Nelson W.C."/>
            <person name="Nierman W.C."/>
            <person name="Beanan M.J."/>
            <person name="Brinkac L.M."/>
            <person name="Daugherty S.C."/>
            <person name="Dodson R.J."/>
            <person name="Durkin A.S."/>
            <person name="Madupu R."/>
            <person name="Haft D.H."/>
            <person name="Selengut J."/>
            <person name="Van Aken S.E."/>
            <person name="Khouri H.M."/>
            <person name="Fedorova N."/>
            <person name="Forberger H.A."/>
            <person name="Tran B."/>
            <person name="Kathariou S."/>
            <person name="Wonderling L.D."/>
            <person name="Uhlich G.A."/>
            <person name="Bayles D.O."/>
            <person name="Luchansky J.B."/>
            <person name="Fraser C.M."/>
        </authorList>
    </citation>
    <scope>NUCLEOTIDE SEQUENCE [LARGE SCALE GENOMIC DNA]</scope>
    <source>
        <strain>F2365</strain>
    </source>
</reference>
<sequence length="271" mass="30408">MLTKKPEINTILQATPDPHSLPAAMATEDLHVYYGDNHAIKGVDLTFPENKVTALIGPSGCGKSTYLRALNRMNDEIDGCRMEGQILYDGININRKEVDLYNVRKEIGMVFQKPNPFTKSIYENVAFGLKRHGMKNKKEIMERVEKSLRRAALWDEVKDDLGKSALSLSGGQQQRLCIARAVAMQPKVLLLDEPASALDPISTSKIEDLINELKNKYTIIIVTHNMQQAARVSDYTSFFYLGEVVEFSGTSELFTNPQQKQTEDYISGNFG</sequence>
<name>PSTB2_LISMF</name>
<organism>
    <name type="scientific">Listeria monocytogenes serotype 4b (strain F2365)</name>
    <dbReference type="NCBI Taxonomy" id="265669"/>
    <lineage>
        <taxon>Bacteria</taxon>
        <taxon>Bacillati</taxon>
        <taxon>Bacillota</taxon>
        <taxon>Bacilli</taxon>
        <taxon>Bacillales</taxon>
        <taxon>Listeriaceae</taxon>
        <taxon>Listeria</taxon>
    </lineage>
</organism>
<proteinExistence type="inferred from homology"/>
<keyword id="KW-0067">ATP-binding</keyword>
<keyword id="KW-1003">Cell membrane</keyword>
<keyword id="KW-0472">Membrane</keyword>
<keyword id="KW-0547">Nucleotide-binding</keyword>
<keyword id="KW-0592">Phosphate transport</keyword>
<keyword id="KW-1278">Translocase</keyword>
<keyword id="KW-0813">Transport</keyword>
<gene>
    <name evidence="1" type="primary">pstB2</name>
    <name type="ordered locus">LMOf2365_2469</name>
</gene>
<evidence type="ECO:0000255" key="1">
    <source>
        <dbReference type="HAMAP-Rule" id="MF_01702"/>
    </source>
</evidence>